<dbReference type="EC" id="2.7.11.1"/>
<dbReference type="EMBL" id="U31833">
    <property type="protein sequence ID" value="AAB03244.1"/>
    <property type="molecule type" value="mRNA"/>
</dbReference>
<dbReference type="EMBL" id="AF286222">
    <property type="protein sequence ID" value="AAG00535.1"/>
    <property type="molecule type" value="Genomic_DNA"/>
</dbReference>
<dbReference type="EMBL" id="AC011560">
    <property type="protein sequence ID" value="AAG51400.1"/>
    <property type="molecule type" value="Genomic_DNA"/>
</dbReference>
<dbReference type="EMBL" id="AC013428">
    <property type="protein sequence ID" value="AAF76372.1"/>
    <property type="molecule type" value="Genomic_DNA"/>
</dbReference>
<dbReference type="EMBL" id="CP002686">
    <property type="protein sequence ID" value="AEE74940.1"/>
    <property type="molecule type" value="Genomic_DNA"/>
</dbReference>
<dbReference type="EMBL" id="CP002686">
    <property type="protein sequence ID" value="ANM63990.1"/>
    <property type="molecule type" value="Genomic_DNA"/>
</dbReference>
<dbReference type="EMBL" id="BT046185">
    <property type="protein sequence ID" value="ACI49784.1"/>
    <property type="molecule type" value="mRNA"/>
</dbReference>
<dbReference type="RefSeq" id="NP_001326044.1">
    <property type="nucleotide sequence ID" value="NM_001337889.1"/>
</dbReference>
<dbReference type="RefSeq" id="NP_187677.1">
    <property type="nucleotide sequence ID" value="NM_111902.2"/>
</dbReference>
<dbReference type="SMR" id="Q38870"/>
<dbReference type="BioGRID" id="5569">
    <property type="interactions" value="1"/>
</dbReference>
<dbReference type="FunCoup" id="Q38870">
    <property type="interactions" value="1375"/>
</dbReference>
<dbReference type="STRING" id="3702.Q38870"/>
<dbReference type="iPTMnet" id="Q38870"/>
<dbReference type="PaxDb" id="3702-AT3G10660.1"/>
<dbReference type="ProteomicsDB" id="241222"/>
<dbReference type="EnsemblPlants" id="AT3G10660.1">
    <property type="protein sequence ID" value="AT3G10660.1"/>
    <property type="gene ID" value="AT3G10660"/>
</dbReference>
<dbReference type="EnsemblPlants" id="AT3G10660.2">
    <property type="protein sequence ID" value="AT3G10660.2"/>
    <property type="gene ID" value="AT3G10660"/>
</dbReference>
<dbReference type="GeneID" id="820235"/>
<dbReference type="Gramene" id="AT3G10660.1">
    <property type="protein sequence ID" value="AT3G10660.1"/>
    <property type="gene ID" value="AT3G10660"/>
</dbReference>
<dbReference type="Gramene" id="AT3G10660.2">
    <property type="protein sequence ID" value="AT3G10660.2"/>
    <property type="gene ID" value="AT3G10660"/>
</dbReference>
<dbReference type="KEGG" id="ath:AT3G10660"/>
<dbReference type="Araport" id="AT3G10660"/>
<dbReference type="TAIR" id="AT3G10660">
    <property type="gene designation" value="CPK2"/>
</dbReference>
<dbReference type="eggNOG" id="KOG0032">
    <property type="taxonomic scope" value="Eukaryota"/>
</dbReference>
<dbReference type="HOGENOM" id="CLU_000288_37_1_1"/>
<dbReference type="InParanoid" id="Q38870"/>
<dbReference type="OMA" id="FDADDWN"/>
<dbReference type="PhylomeDB" id="Q38870"/>
<dbReference type="PRO" id="PR:Q38870"/>
<dbReference type="Proteomes" id="UP000006548">
    <property type="component" value="Chromosome 3"/>
</dbReference>
<dbReference type="ExpressionAtlas" id="Q38870">
    <property type="expression patterns" value="baseline and differential"/>
</dbReference>
<dbReference type="GO" id="GO:0005789">
    <property type="term" value="C:endoplasmic reticulum membrane"/>
    <property type="evidence" value="ECO:0000314"/>
    <property type="project" value="TAIR"/>
</dbReference>
<dbReference type="GO" id="GO:0005524">
    <property type="term" value="F:ATP binding"/>
    <property type="evidence" value="ECO:0007669"/>
    <property type="project" value="UniProtKB-KW"/>
</dbReference>
<dbReference type="GO" id="GO:0005509">
    <property type="term" value="F:calcium ion binding"/>
    <property type="evidence" value="ECO:0007669"/>
    <property type="project" value="InterPro"/>
</dbReference>
<dbReference type="GO" id="GO:0106310">
    <property type="term" value="F:protein serine kinase activity"/>
    <property type="evidence" value="ECO:0007669"/>
    <property type="project" value="RHEA"/>
</dbReference>
<dbReference type="GO" id="GO:0004674">
    <property type="term" value="F:protein serine/threonine kinase activity"/>
    <property type="evidence" value="ECO:0007669"/>
    <property type="project" value="UniProtKB-KW"/>
</dbReference>
<dbReference type="CDD" id="cd00051">
    <property type="entry name" value="EFh"/>
    <property type="match status" value="2"/>
</dbReference>
<dbReference type="CDD" id="cd05117">
    <property type="entry name" value="STKc_CAMK"/>
    <property type="match status" value="1"/>
</dbReference>
<dbReference type="FunFam" id="1.10.238.10:FF:000015">
    <property type="entry name" value="Calcium-dependent protein kinase 1"/>
    <property type="match status" value="1"/>
</dbReference>
<dbReference type="FunFam" id="3.30.200.20:FF:000004">
    <property type="entry name" value="Calcium-dependent protein kinase 1"/>
    <property type="match status" value="1"/>
</dbReference>
<dbReference type="FunFam" id="1.10.510.10:FF:000249">
    <property type="entry name" value="Calcium-dependent protein kinase SK5"/>
    <property type="match status" value="1"/>
</dbReference>
<dbReference type="Gene3D" id="1.10.238.10">
    <property type="entry name" value="EF-hand"/>
    <property type="match status" value="1"/>
</dbReference>
<dbReference type="Gene3D" id="3.30.200.20">
    <property type="entry name" value="Phosphorylase Kinase, domain 1"/>
    <property type="match status" value="1"/>
</dbReference>
<dbReference type="Gene3D" id="1.10.510.10">
    <property type="entry name" value="Transferase(Phosphotransferase) domain 1"/>
    <property type="match status" value="1"/>
</dbReference>
<dbReference type="InterPro" id="IPR050205">
    <property type="entry name" value="CDPK_Ser/Thr_kinases"/>
</dbReference>
<dbReference type="InterPro" id="IPR011992">
    <property type="entry name" value="EF-hand-dom_pair"/>
</dbReference>
<dbReference type="InterPro" id="IPR018247">
    <property type="entry name" value="EF_Hand_1_Ca_BS"/>
</dbReference>
<dbReference type="InterPro" id="IPR002048">
    <property type="entry name" value="EF_hand_dom"/>
</dbReference>
<dbReference type="InterPro" id="IPR011009">
    <property type="entry name" value="Kinase-like_dom_sf"/>
</dbReference>
<dbReference type="InterPro" id="IPR000719">
    <property type="entry name" value="Prot_kinase_dom"/>
</dbReference>
<dbReference type="InterPro" id="IPR017441">
    <property type="entry name" value="Protein_kinase_ATP_BS"/>
</dbReference>
<dbReference type="InterPro" id="IPR008271">
    <property type="entry name" value="Ser/Thr_kinase_AS"/>
</dbReference>
<dbReference type="PANTHER" id="PTHR24349">
    <property type="entry name" value="SERINE/THREONINE-PROTEIN KINASE"/>
    <property type="match status" value="1"/>
</dbReference>
<dbReference type="Pfam" id="PF13499">
    <property type="entry name" value="EF-hand_7"/>
    <property type="match status" value="2"/>
</dbReference>
<dbReference type="Pfam" id="PF00069">
    <property type="entry name" value="Pkinase"/>
    <property type="match status" value="1"/>
</dbReference>
<dbReference type="SMART" id="SM00054">
    <property type="entry name" value="EFh"/>
    <property type="match status" value="4"/>
</dbReference>
<dbReference type="SMART" id="SM00220">
    <property type="entry name" value="S_TKc"/>
    <property type="match status" value="1"/>
</dbReference>
<dbReference type="SUPFAM" id="SSF47473">
    <property type="entry name" value="EF-hand"/>
    <property type="match status" value="1"/>
</dbReference>
<dbReference type="SUPFAM" id="SSF56112">
    <property type="entry name" value="Protein kinase-like (PK-like)"/>
    <property type="match status" value="1"/>
</dbReference>
<dbReference type="PROSITE" id="PS00018">
    <property type="entry name" value="EF_HAND_1"/>
    <property type="match status" value="4"/>
</dbReference>
<dbReference type="PROSITE" id="PS50222">
    <property type="entry name" value="EF_HAND_2"/>
    <property type="match status" value="4"/>
</dbReference>
<dbReference type="PROSITE" id="PS00107">
    <property type="entry name" value="PROTEIN_KINASE_ATP"/>
    <property type="match status" value="1"/>
</dbReference>
<dbReference type="PROSITE" id="PS50011">
    <property type="entry name" value="PROTEIN_KINASE_DOM"/>
    <property type="match status" value="1"/>
</dbReference>
<dbReference type="PROSITE" id="PS00108">
    <property type="entry name" value="PROTEIN_KINASE_ST"/>
    <property type="match status" value="1"/>
</dbReference>
<evidence type="ECO:0000250" key="1"/>
<evidence type="ECO:0000250" key="2">
    <source>
        <dbReference type="UniProtKB" id="Q06850"/>
    </source>
</evidence>
<evidence type="ECO:0000250" key="3">
    <source>
        <dbReference type="UniProtKB" id="Q9FKW4"/>
    </source>
</evidence>
<evidence type="ECO:0000255" key="4">
    <source>
        <dbReference type="PROSITE-ProRule" id="PRU00159"/>
    </source>
</evidence>
<evidence type="ECO:0000255" key="5">
    <source>
        <dbReference type="PROSITE-ProRule" id="PRU00448"/>
    </source>
</evidence>
<evidence type="ECO:0000255" key="6">
    <source>
        <dbReference type="PROSITE-ProRule" id="PRU10027"/>
    </source>
</evidence>
<evidence type="ECO:0000256" key="7">
    <source>
        <dbReference type="SAM" id="MobiDB-lite"/>
    </source>
</evidence>
<evidence type="ECO:0000269" key="8">
    <source>
    </source>
</evidence>
<evidence type="ECO:0000269" key="9">
    <source>
    </source>
</evidence>
<evidence type="ECO:0000269" key="10">
    <source>
    </source>
</evidence>
<evidence type="ECO:0000269" key="11">
    <source ref="6"/>
</evidence>
<gene>
    <name type="primary">CPK2</name>
    <name type="ordered locus">At3g10660</name>
    <name type="ORF">F13M14.5</name>
    <name type="ORF">F18K10.28</name>
</gene>
<protein>
    <recommendedName>
        <fullName>Calcium-dependent protein kinase 2</fullName>
        <ecNumber>2.7.11.1</ecNumber>
    </recommendedName>
    <alternativeName>
        <fullName>Calmodulin-domain protein kinase CDPK isoform 2</fullName>
    </alternativeName>
</protein>
<organism>
    <name type="scientific">Arabidopsis thaliana</name>
    <name type="common">Mouse-ear cress</name>
    <dbReference type="NCBI Taxonomy" id="3702"/>
    <lineage>
        <taxon>Eukaryota</taxon>
        <taxon>Viridiplantae</taxon>
        <taxon>Streptophyta</taxon>
        <taxon>Embryophyta</taxon>
        <taxon>Tracheophyta</taxon>
        <taxon>Spermatophyta</taxon>
        <taxon>Magnoliopsida</taxon>
        <taxon>eudicotyledons</taxon>
        <taxon>Gunneridae</taxon>
        <taxon>Pentapetalae</taxon>
        <taxon>rosids</taxon>
        <taxon>malvids</taxon>
        <taxon>Brassicales</taxon>
        <taxon>Brassicaceae</taxon>
        <taxon>Camelineae</taxon>
        <taxon>Arabidopsis</taxon>
    </lineage>
</organism>
<reference key="1">
    <citation type="journal article" date="1996" name="Plant Mol. Biol.">
        <title>Characterization of eight new members of the calmodulin-like domain protein kinase gene family from Arabidopsis thaliana.</title>
        <authorList>
            <person name="Hrabak E.M."/>
            <person name="Dickmann L.J."/>
            <person name="Satterlee J.S."/>
            <person name="Sussman M.R."/>
        </authorList>
    </citation>
    <scope>NUCLEOTIDE SEQUENCE [MRNA]</scope>
    <source>
        <strain>cv. Columbia</strain>
    </source>
</reference>
<reference key="2">
    <citation type="journal article" date="2002" name="Plant Physiol.">
        <title>An Arabidopsis calcium-dependent protein kinase is associated with the endoplasmic reticulum.</title>
        <authorList>
            <person name="Lu S.X."/>
            <person name="Hrabak E.M."/>
        </authorList>
    </citation>
    <scope>NUCLEOTIDE SEQUENCE [GENOMIC DNA]</scope>
    <scope>MYRISTOYLATION AT GLY-2</scope>
    <scope>SUBCELLULAR LOCATION</scope>
    <scope>MUTAGENESIS OF GLY-2</scope>
</reference>
<reference key="3">
    <citation type="journal article" date="2000" name="Nature">
        <title>Sequence and analysis of chromosome 3 of the plant Arabidopsis thaliana.</title>
        <authorList>
            <person name="Salanoubat M."/>
            <person name="Lemcke K."/>
            <person name="Rieger M."/>
            <person name="Ansorge W."/>
            <person name="Unseld M."/>
            <person name="Fartmann B."/>
            <person name="Valle G."/>
            <person name="Bloecker H."/>
            <person name="Perez-Alonso M."/>
            <person name="Obermaier B."/>
            <person name="Delseny M."/>
            <person name="Boutry M."/>
            <person name="Grivell L.A."/>
            <person name="Mache R."/>
            <person name="Puigdomenech P."/>
            <person name="De Simone V."/>
            <person name="Choisne N."/>
            <person name="Artiguenave F."/>
            <person name="Robert C."/>
            <person name="Brottier P."/>
            <person name="Wincker P."/>
            <person name="Cattolico L."/>
            <person name="Weissenbach J."/>
            <person name="Saurin W."/>
            <person name="Quetier F."/>
            <person name="Schaefer M."/>
            <person name="Mueller-Auer S."/>
            <person name="Gabel C."/>
            <person name="Fuchs M."/>
            <person name="Benes V."/>
            <person name="Wurmbach E."/>
            <person name="Drzonek H."/>
            <person name="Erfle H."/>
            <person name="Jordan N."/>
            <person name="Bangert S."/>
            <person name="Wiedelmann R."/>
            <person name="Kranz H."/>
            <person name="Voss H."/>
            <person name="Holland R."/>
            <person name="Brandt P."/>
            <person name="Nyakatura G."/>
            <person name="Vezzi A."/>
            <person name="D'Angelo M."/>
            <person name="Pallavicini A."/>
            <person name="Toppo S."/>
            <person name="Simionati B."/>
            <person name="Conrad A."/>
            <person name="Hornischer K."/>
            <person name="Kauer G."/>
            <person name="Loehnert T.-H."/>
            <person name="Nordsiek G."/>
            <person name="Reichelt J."/>
            <person name="Scharfe M."/>
            <person name="Schoen O."/>
            <person name="Bargues M."/>
            <person name="Terol J."/>
            <person name="Climent J."/>
            <person name="Navarro P."/>
            <person name="Collado C."/>
            <person name="Perez-Perez A."/>
            <person name="Ottenwaelder B."/>
            <person name="Duchemin D."/>
            <person name="Cooke R."/>
            <person name="Laudie M."/>
            <person name="Berger-Llauro C."/>
            <person name="Purnelle B."/>
            <person name="Masuy D."/>
            <person name="de Haan M."/>
            <person name="Maarse A.C."/>
            <person name="Alcaraz J.-P."/>
            <person name="Cottet A."/>
            <person name="Casacuberta E."/>
            <person name="Monfort A."/>
            <person name="Argiriou A."/>
            <person name="Flores M."/>
            <person name="Liguori R."/>
            <person name="Vitale D."/>
            <person name="Mannhaupt G."/>
            <person name="Haase D."/>
            <person name="Schoof H."/>
            <person name="Rudd S."/>
            <person name="Zaccaria P."/>
            <person name="Mewes H.-W."/>
            <person name="Mayer K.F.X."/>
            <person name="Kaul S."/>
            <person name="Town C.D."/>
            <person name="Koo H.L."/>
            <person name="Tallon L.J."/>
            <person name="Jenkins J."/>
            <person name="Rooney T."/>
            <person name="Rizzo M."/>
            <person name="Walts A."/>
            <person name="Utterback T."/>
            <person name="Fujii C.Y."/>
            <person name="Shea T.P."/>
            <person name="Creasy T.H."/>
            <person name="Haas B."/>
            <person name="Maiti R."/>
            <person name="Wu D."/>
            <person name="Peterson J."/>
            <person name="Van Aken S."/>
            <person name="Pai G."/>
            <person name="Militscher J."/>
            <person name="Sellers P."/>
            <person name="Gill J.E."/>
            <person name="Feldblyum T.V."/>
            <person name="Preuss D."/>
            <person name="Lin X."/>
            <person name="Nierman W.C."/>
            <person name="Salzberg S.L."/>
            <person name="White O."/>
            <person name="Venter J.C."/>
            <person name="Fraser C.M."/>
            <person name="Kaneko T."/>
            <person name="Nakamura Y."/>
            <person name="Sato S."/>
            <person name="Kato T."/>
            <person name="Asamizu E."/>
            <person name="Sasamoto S."/>
            <person name="Kimura T."/>
            <person name="Idesawa K."/>
            <person name="Kawashima K."/>
            <person name="Kishida Y."/>
            <person name="Kiyokawa C."/>
            <person name="Kohara M."/>
            <person name="Matsumoto M."/>
            <person name="Matsuno A."/>
            <person name="Muraki A."/>
            <person name="Nakayama S."/>
            <person name="Nakazaki N."/>
            <person name="Shinpo S."/>
            <person name="Takeuchi C."/>
            <person name="Wada T."/>
            <person name="Watanabe A."/>
            <person name="Yamada M."/>
            <person name="Yasuda M."/>
            <person name="Tabata S."/>
        </authorList>
    </citation>
    <scope>NUCLEOTIDE SEQUENCE [LARGE SCALE GENOMIC DNA]</scope>
    <source>
        <strain>cv. Columbia</strain>
    </source>
</reference>
<reference key="4">
    <citation type="journal article" date="2017" name="Plant J.">
        <title>Araport11: a complete reannotation of the Arabidopsis thaliana reference genome.</title>
        <authorList>
            <person name="Cheng C.Y."/>
            <person name="Krishnakumar V."/>
            <person name="Chan A.P."/>
            <person name="Thibaud-Nissen F."/>
            <person name="Schobel S."/>
            <person name="Town C.D."/>
        </authorList>
    </citation>
    <scope>GENOME REANNOTATION</scope>
    <source>
        <strain>cv. Columbia</strain>
    </source>
</reference>
<reference key="5">
    <citation type="submission" date="2008-10" db="EMBL/GenBank/DDBJ databases">
        <title>Arabidopsis ORF clones.</title>
        <authorList>
            <person name="De Los Reyes C."/>
            <person name="Quan R."/>
            <person name="Chen H."/>
            <person name="Bautista V.R."/>
            <person name="Kim C.J."/>
            <person name="Ecker J.R."/>
        </authorList>
    </citation>
    <scope>NUCLEOTIDE SEQUENCE [LARGE SCALE MRNA]</scope>
    <source>
        <strain>cv. Columbia</strain>
    </source>
</reference>
<reference key="6">
    <citation type="journal article" date="1999" name="Plant J.">
        <title>Phosphorylation-dependent interactions between enzymes of plant metabolism and 14-3-3 proteins.</title>
        <authorList>
            <person name="Moorhead G."/>
            <person name="Douglas P."/>
            <person name="Cotelle V."/>
            <person name="Harthill J."/>
            <person name="Morrice N."/>
            <person name="Meek S."/>
            <person name="Deiting U."/>
            <person name="Stitt M."/>
            <person name="Scarabel M."/>
            <person name="Aitken A."/>
            <person name="MacKintosh C."/>
        </authorList>
    </citation>
    <scope>INTERACTION WITH 14-3-3 PROTEINS</scope>
</reference>
<reference key="7">
    <citation type="journal article" date="2001" name="New Phytol.">
        <title>The CDPK superfamily of protein kinases.</title>
        <authorList>
            <person name="Harmon A.C."/>
            <person name="Gribskov M."/>
            <person name="Gubrium E."/>
            <person name="Harper J.F."/>
        </authorList>
    </citation>
    <scope>GENE FAMILY</scope>
    <scope>NOMENCLATURE</scope>
</reference>
<reference key="8">
    <citation type="journal article" date="2002" name="Plant Physiol.">
        <title>Calcium signaling through protein kinases. The Arabidopsis calcium-dependent protein kinase gene family.</title>
        <authorList>
            <person name="Cheng S.-H."/>
            <person name="Willmann M.R."/>
            <person name="Chen H.-C."/>
            <person name="Sheen J."/>
        </authorList>
    </citation>
    <scope>GENE FAMILY</scope>
    <scope>NOMENCLATURE</scope>
</reference>
<reference key="9">
    <citation type="journal article" date="2003" name="J. Biol. Chem.">
        <title>Unexpected protein families including cell defense components feature in the N-myristoylome of a higher eukaryote.</title>
        <authorList>
            <person name="Boisson B."/>
            <person name="Giglione C."/>
            <person name="Meinnel T."/>
        </authorList>
    </citation>
    <scope>MYRISTOYLATION AT GLY-2</scope>
</reference>
<reference key="10">
    <citation type="journal article" date="2003" name="Plant Physiol.">
        <title>The Arabidopsis CDPK-SnRK superfamily of protein kinases.</title>
        <authorList>
            <person name="Hrabak E.M."/>
            <person name="Chan C.W.M."/>
            <person name="Gribskov M."/>
            <person name="Harper J.F."/>
            <person name="Choi J.H."/>
            <person name="Halford N."/>
            <person name="Kudla J."/>
            <person name="Luan S."/>
            <person name="Nimmo H.G."/>
            <person name="Sussman M.R."/>
            <person name="Thomas M."/>
            <person name="Walker-Simmons K."/>
            <person name="Zhu J.-K."/>
            <person name="Harmon A.C."/>
        </authorList>
    </citation>
    <scope>GENE FAMILY</scope>
    <scope>NOMENCLATURE</scope>
</reference>
<reference key="11">
    <citation type="journal article" date="2008" name="Cell Cycle">
        <title>Experimental testing of predicted myristoylation targets involved in asymmetric cell division and calcium-dependent signalling.</title>
        <authorList>
            <person name="Benetka W."/>
            <person name="Mehlmer N."/>
            <person name="Maurer-Stroh S."/>
            <person name="Sammer M."/>
            <person name="Koranda M."/>
            <person name="Neumueller R."/>
            <person name="Betschinger J."/>
            <person name="Knoblich J.A."/>
            <person name="Teige M."/>
            <person name="Eisenhaber F."/>
        </authorList>
    </citation>
    <scope>MYRISTOYLATION AT GLY-2</scope>
</reference>
<name>CDPK2_ARATH</name>
<comment type="function">
    <text>May play a role in signal transduction pathways that involve calcium as a second messenger.</text>
</comment>
<comment type="catalytic activity">
    <reaction>
        <text>L-seryl-[protein] + ATP = O-phospho-L-seryl-[protein] + ADP + H(+)</text>
        <dbReference type="Rhea" id="RHEA:17989"/>
        <dbReference type="Rhea" id="RHEA-COMP:9863"/>
        <dbReference type="Rhea" id="RHEA-COMP:11604"/>
        <dbReference type="ChEBI" id="CHEBI:15378"/>
        <dbReference type="ChEBI" id="CHEBI:29999"/>
        <dbReference type="ChEBI" id="CHEBI:30616"/>
        <dbReference type="ChEBI" id="CHEBI:83421"/>
        <dbReference type="ChEBI" id="CHEBI:456216"/>
        <dbReference type="EC" id="2.7.11.1"/>
    </reaction>
</comment>
<comment type="catalytic activity">
    <reaction>
        <text>L-threonyl-[protein] + ATP = O-phospho-L-threonyl-[protein] + ADP + H(+)</text>
        <dbReference type="Rhea" id="RHEA:46608"/>
        <dbReference type="Rhea" id="RHEA-COMP:11060"/>
        <dbReference type="Rhea" id="RHEA-COMP:11605"/>
        <dbReference type="ChEBI" id="CHEBI:15378"/>
        <dbReference type="ChEBI" id="CHEBI:30013"/>
        <dbReference type="ChEBI" id="CHEBI:30616"/>
        <dbReference type="ChEBI" id="CHEBI:61977"/>
        <dbReference type="ChEBI" id="CHEBI:456216"/>
        <dbReference type="EC" id="2.7.11.1"/>
    </reaction>
</comment>
<comment type="activity regulation">
    <text evidence="1">Activated by calcium. Autophosphorylation may play an important role in the regulation of the kinase activity (By similarity).</text>
</comment>
<comment type="subunit">
    <text evidence="11">Interacts with 14-3-3 proteins.</text>
</comment>
<comment type="subcellular location">
    <subcellularLocation>
        <location evidence="8">Endoplasmic reticulum membrane</location>
        <topology evidence="8">Lipid-anchor</topology>
    </subcellularLocation>
</comment>
<comment type="domain">
    <text evidence="1">There are 3 contiguous domains conserved in the CDPK subfamily: a kinase domain, an autoinhibitory (junction) domain and a calmodulin-like domain. The autoinhibitory domain (450-480) inactivates kinase activity under calcium-free conditions (By similarity).</text>
</comment>
<comment type="similarity">
    <text evidence="4">Belongs to the protein kinase superfamily. Ser/Thr protein kinase family. CDPK subfamily.</text>
</comment>
<sequence length="646" mass="72254">MGNACVGPNISGNGFLQTVTAAMWRPRIGAEQASSSSHGNGQVSKEAASEPATDQVQNKPPEPITMPSSKTNPETKLKPDLEIQPEEKKEKVLAEETKQKVVPEESKQEVPPEESKREVVVQPESAKPETKSESKPETTKPETTSETKPETKAEPQKPKHMRRVSSAGLRTESVLQRKTENFKEFYSLGRKLGQGQFGTTFLCLEKGTGNEYACKSISKRKLLTDEDVEDVRREIQIMHHLAGHPNVISIKGAYEDVVAVHLVMELCSGGELFDRIIQRGHYTERKAAELARTIVGVLEACHSLGVMHRDLKPENFLFVSREEDSLLKTIDFGLSMFFKPDEVFTDVVGSPYYVAPEVLRKRYGPESDVWSAGVIVYILLSGVPPFWAETEQGIFEQVLHGDLDFSSDPWPSISESAKDLVRKMLVRDPKRRLTAHQVLCHPWVQIDGVAPDKPLDSAVLSRMKQFSAMNKFKKMALRVIAESLSEEEIAGLKQMFKMIDADNSGQITFEELKAGLKRVGANLKESEILDLMQAADVDNSGTIDYKEFIAATLHLNKIEREDHLFAAFSYFDKDESGFITPDELQQACEEFGVEDARIEEMMRDVDQDKDGRIDYNEFVAMMQKGSIMGGPVKMGLENSISISLKH</sequence>
<accession>Q38870</accession>
<keyword id="KW-0067">ATP-binding</keyword>
<keyword id="KW-0106">Calcium</keyword>
<keyword id="KW-0256">Endoplasmic reticulum</keyword>
<keyword id="KW-0418">Kinase</keyword>
<keyword id="KW-0449">Lipoprotein</keyword>
<keyword id="KW-0472">Membrane</keyword>
<keyword id="KW-0479">Metal-binding</keyword>
<keyword id="KW-0519">Myristate</keyword>
<keyword id="KW-0547">Nucleotide-binding</keyword>
<keyword id="KW-0564">Palmitate</keyword>
<keyword id="KW-0597">Phosphoprotein</keyword>
<keyword id="KW-1185">Reference proteome</keyword>
<keyword id="KW-0677">Repeat</keyword>
<keyword id="KW-0723">Serine/threonine-protein kinase</keyword>
<keyword id="KW-0808">Transferase</keyword>
<proteinExistence type="evidence at protein level"/>
<feature type="initiator methionine" description="Removed">
    <location>
        <position position="1"/>
    </location>
</feature>
<feature type="chain" id="PRO_0000363329" description="Calcium-dependent protein kinase 2">
    <location>
        <begin position="2"/>
        <end position="646"/>
    </location>
</feature>
<feature type="domain" description="Protein kinase" evidence="4">
    <location>
        <begin position="186"/>
        <end position="444"/>
    </location>
</feature>
<feature type="domain" description="EF-hand 1" evidence="5">
    <location>
        <begin position="487"/>
        <end position="522"/>
    </location>
</feature>
<feature type="domain" description="EF-hand 2" evidence="5">
    <location>
        <begin position="523"/>
        <end position="558"/>
    </location>
</feature>
<feature type="domain" description="EF-hand 3" evidence="5">
    <location>
        <begin position="559"/>
        <end position="592"/>
    </location>
</feature>
<feature type="domain" description="EF-hand 4" evidence="5">
    <location>
        <begin position="593"/>
        <end position="628"/>
    </location>
</feature>
<feature type="region of interest" description="Disordered" evidence="7">
    <location>
        <begin position="27"/>
        <end position="169"/>
    </location>
</feature>
<feature type="region of interest" description="Autoinhibitory domain" evidence="1">
    <location>
        <begin position="450"/>
        <end position="480"/>
    </location>
</feature>
<feature type="compositionally biased region" description="Polar residues" evidence="7">
    <location>
        <begin position="32"/>
        <end position="43"/>
    </location>
</feature>
<feature type="compositionally biased region" description="Basic and acidic residues" evidence="7">
    <location>
        <begin position="73"/>
        <end position="119"/>
    </location>
</feature>
<feature type="compositionally biased region" description="Basic and acidic residues" evidence="7">
    <location>
        <begin position="126"/>
        <end position="157"/>
    </location>
</feature>
<feature type="active site" description="Proton acceptor" evidence="4 6">
    <location>
        <position position="310"/>
    </location>
</feature>
<feature type="binding site" evidence="4">
    <location>
        <begin position="192"/>
        <end position="200"/>
    </location>
    <ligand>
        <name>ATP</name>
        <dbReference type="ChEBI" id="CHEBI:30616"/>
    </ligand>
</feature>
<feature type="binding site" evidence="4">
    <location>
        <position position="215"/>
    </location>
    <ligand>
        <name>ATP</name>
        <dbReference type="ChEBI" id="CHEBI:30616"/>
    </ligand>
</feature>
<feature type="binding site" evidence="5">
    <location>
        <position position="500"/>
    </location>
    <ligand>
        <name>Ca(2+)</name>
        <dbReference type="ChEBI" id="CHEBI:29108"/>
        <label>1</label>
    </ligand>
</feature>
<feature type="binding site" evidence="5">
    <location>
        <position position="502"/>
    </location>
    <ligand>
        <name>Ca(2+)</name>
        <dbReference type="ChEBI" id="CHEBI:29108"/>
        <label>1</label>
    </ligand>
</feature>
<feature type="binding site" evidence="5">
    <location>
        <position position="504"/>
    </location>
    <ligand>
        <name>Ca(2+)</name>
        <dbReference type="ChEBI" id="CHEBI:29108"/>
        <label>1</label>
    </ligand>
</feature>
<feature type="binding site" evidence="5">
    <location>
        <position position="506"/>
    </location>
    <ligand>
        <name>Ca(2+)</name>
        <dbReference type="ChEBI" id="CHEBI:29108"/>
        <label>1</label>
    </ligand>
</feature>
<feature type="binding site" evidence="5">
    <location>
        <position position="511"/>
    </location>
    <ligand>
        <name>Ca(2+)</name>
        <dbReference type="ChEBI" id="CHEBI:29108"/>
        <label>1</label>
    </ligand>
</feature>
<feature type="binding site" evidence="5">
    <location>
        <position position="536"/>
    </location>
    <ligand>
        <name>Ca(2+)</name>
        <dbReference type="ChEBI" id="CHEBI:29108"/>
        <label>2</label>
    </ligand>
</feature>
<feature type="binding site" evidence="5">
    <location>
        <position position="538"/>
    </location>
    <ligand>
        <name>Ca(2+)</name>
        <dbReference type="ChEBI" id="CHEBI:29108"/>
        <label>2</label>
    </ligand>
</feature>
<feature type="binding site" evidence="5">
    <location>
        <position position="540"/>
    </location>
    <ligand>
        <name>Ca(2+)</name>
        <dbReference type="ChEBI" id="CHEBI:29108"/>
        <label>2</label>
    </ligand>
</feature>
<feature type="binding site" evidence="5">
    <location>
        <position position="542"/>
    </location>
    <ligand>
        <name>Ca(2+)</name>
        <dbReference type="ChEBI" id="CHEBI:29108"/>
        <label>2</label>
    </ligand>
</feature>
<feature type="binding site" evidence="5">
    <location>
        <position position="547"/>
    </location>
    <ligand>
        <name>Ca(2+)</name>
        <dbReference type="ChEBI" id="CHEBI:29108"/>
        <label>2</label>
    </ligand>
</feature>
<feature type="binding site" evidence="5">
    <location>
        <position position="572"/>
    </location>
    <ligand>
        <name>Ca(2+)</name>
        <dbReference type="ChEBI" id="CHEBI:29108"/>
        <label>3</label>
    </ligand>
</feature>
<feature type="binding site" evidence="5">
    <location>
        <position position="574"/>
    </location>
    <ligand>
        <name>Ca(2+)</name>
        <dbReference type="ChEBI" id="CHEBI:29108"/>
        <label>3</label>
    </ligand>
</feature>
<feature type="binding site" evidence="5">
    <location>
        <position position="576"/>
    </location>
    <ligand>
        <name>Ca(2+)</name>
        <dbReference type="ChEBI" id="CHEBI:29108"/>
        <label>3</label>
    </ligand>
</feature>
<feature type="binding site" evidence="5">
    <location>
        <position position="583"/>
    </location>
    <ligand>
        <name>Ca(2+)</name>
        <dbReference type="ChEBI" id="CHEBI:29108"/>
        <label>3</label>
    </ligand>
</feature>
<feature type="binding site" evidence="5">
    <location>
        <position position="606"/>
    </location>
    <ligand>
        <name>Ca(2+)</name>
        <dbReference type="ChEBI" id="CHEBI:29108"/>
        <label>4</label>
    </ligand>
</feature>
<feature type="binding site" evidence="5">
    <location>
        <position position="608"/>
    </location>
    <ligand>
        <name>Ca(2+)</name>
        <dbReference type="ChEBI" id="CHEBI:29108"/>
        <label>4</label>
    </ligand>
</feature>
<feature type="binding site" evidence="5">
    <location>
        <position position="610"/>
    </location>
    <ligand>
        <name>Ca(2+)</name>
        <dbReference type="ChEBI" id="CHEBI:29108"/>
        <label>4</label>
    </ligand>
</feature>
<feature type="binding site" evidence="5">
    <location>
        <position position="612"/>
    </location>
    <ligand>
        <name>Ca(2+)</name>
        <dbReference type="ChEBI" id="CHEBI:29108"/>
        <label>4</label>
    </ligand>
</feature>
<feature type="binding site" evidence="5">
    <location>
        <position position="617"/>
    </location>
    <ligand>
        <name>Ca(2+)</name>
        <dbReference type="ChEBI" id="CHEBI:29108"/>
        <label>4</label>
    </ligand>
</feature>
<feature type="modified residue" description="Phosphoserine" evidence="3">
    <location>
        <position position="350"/>
    </location>
</feature>
<feature type="lipid moiety-binding region" description="N-myristoyl glycine" evidence="8 9 10">
    <location>
        <position position="2"/>
    </location>
</feature>
<feature type="lipid moiety-binding region" description="S-palmitoyl cysteine" evidence="2">
    <location>
        <position position="5"/>
    </location>
</feature>
<feature type="mutagenesis site" description="Decreases membrane association by approximately 50%." evidence="8">
    <original>G</original>
    <variation>A</variation>
    <location>
        <position position="2"/>
    </location>
</feature>